<dbReference type="EC" id="2.5.1.7" evidence="1"/>
<dbReference type="EMBL" id="CR628336">
    <property type="protein sequence ID" value="CAH12060.1"/>
    <property type="molecule type" value="Genomic_DNA"/>
</dbReference>
<dbReference type="RefSeq" id="WP_010946583.1">
    <property type="nucleotide sequence ID" value="NC_006368.1"/>
</dbReference>
<dbReference type="SMR" id="Q5X6Q6"/>
<dbReference type="GeneID" id="57034835"/>
<dbReference type="KEGG" id="lpp:lpp0909"/>
<dbReference type="LegioList" id="lpp0909"/>
<dbReference type="HOGENOM" id="CLU_027387_0_0_6"/>
<dbReference type="UniPathway" id="UPA00219"/>
<dbReference type="GO" id="GO:0005737">
    <property type="term" value="C:cytoplasm"/>
    <property type="evidence" value="ECO:0007669"/>
    <property type="project" value="UniProtKB-SubCell"/>
</dbReference>
<dbReference type="GO" id="GO:0008760">
    <property type="term" value="F:UDP-N-acetylglucosamine 1-carboxyvinyltransferase activity"/>
    <property type="evidence" value="ECO:0007669"/>
    <property type="project" value="UniProtKB-UniRule"/>
</dbReference>
<dbReference type="GO" id="GO:0051301">
    <property type="term" value="P:cell division"/>
    <property type="evidence" value="ECO:0007669"/>
    <property type="project" value="UniProtKB-KW"/>
</dbReference>
<dbReference type="GO" id="GO:0071555">
    <property type="term" value="P:cell wall organization"/>
    <property type="evidence" value="ECO:0007669"/>
    <property type="project" value="UniProtKB-KW"/>
</dbReference>
<dbReference type="GO" id="GO:0009252">
    <property type="term" value="P:peptidoglycan biosynthetic process"/>
    <property type="evidence" value="ECO:0007669"/>
    <property type="project" value="UniProtKB-UniRule"/>
</dbReference>
<dbReference type="GO" id="GO:0008360">
    <property type="term" value="P:regulation of cell shape"/>
    <property type="evidence" value="ECO:0007669"/>
    <property type="project" value="UniProtKB-KW"/>
</dbReference>
<dbReference type="GO" id="GO:0019277">
    <property type="term" value="P:UDP-N-acetylgalactosamine biosynthetic process"/>
    <property type="evidence" value="ECO:0007669"/>
    <property type="project" value="InterPro"/>
</dbReference>
<dbReference type="CDD" id="cd01555">
    <property type="entry name" value="UdpNAET"/>
    <property type="match status" value="1"/>
</dbReference>
<dbReference type="FunFam" id="3.65.10.10:FF:000001">
    <property type="entry name" value="UDP-N-acetylglucosamine 1-carboxyvinyltransferase"/>
    <property type="match status" value="1"/>
</dbReference>
<dbReference type="Gene3D" id="3.65.10.10">
    <property type="entry name" value="Enolpyruvate transferase domain"/>
    <property type="match status" value="2"/>
</dbReference>
<dbReference type="HAMAP" id="MF_00111">
    <property type="entry name" value="MurA"/>
    <property type="match status" value="1"/>
</dbReference>
<dbReference type="InterPro" id="IPR001986">
    <property type="entry name" value="Enolpyruvate_Tfrase_dom"/>
</dbReference>
<dbReference type="InterPro" id="IPR036968">
    <property type="entry name" value="Enolpyruvate_Tfrase_sf"/>
</dbReference>
<dbReference type="InterPro" id="IPR050068">
    <property type="entry name" value="MurA_subfamily"/>
</dbReference>
<dbReference type="InterPro" id="IPR013792">
    <property type="entry name" value="RNA3'P_cycl/enolpyr_Trfase_a/b"/>
</dbReference>
<dbReference type="InterPro" id="IPR005750">
    <property type="entry name" value="UDP_GlcNAc_COvinyl_MurA"/>
</dbReference>
<dbReference type="NCBIfam" id="TIGR01072">
    <property type="entry name" value="murA"/>
    <property type="match status" value="1"/>
</dbReference>
<dbReference type="NCBIfam" id="NF006873">
    <property type="entry name" value="PRK09369.1"/>
    <property type="match status" value="1"/>
</dbReference>
<dbReference type="PANTHER" id="PTHR43783">
    <property type="entry name" value="UDP-N-ACETYLGLUCOSAMINE 1-CARBOXYVINYLTRANSFERASE"/>
    <property type="match status" value="1"/>
</dbReference>
<dbReference type="PANTHER" id="PTHR43783:SF1">
    <property type="entry name" value="UDP-N-ACETYLGLUCOSAMINE 1-CARBOXYVINYLTRANSFERASE"/>
    <property type="match status" value="1"/>
</dbReference>
<dbReference type="Pfam" id="PF00275">
    <property type="entry name" value="EPSP_synthase"/>
    <property type="match status" value="1"/>
</dbReference>
<dbReference type="SUPFAM" id="SSF55205">
    <property type="entry name" value="EPT/RTPC-like"/>
    <property type="match status" value="1"/>
</dbReference>
<gene>
    <name evidence="1" type="primary">murA</name>
    <name type="ordered locus">lpp0909</name>
</gene>
<organism>
    <name type="scientific">Legionella pneumophila (strain Paris)</name>
    <dbReference type="NCBI Taxonomy" id="297246"/>
    <lineage>
        <taxon>Bacteria</taxon>
        <taxon>Pseudomonadati</taxon>
        <taxon>Pseudomonadota</taxon>
        <taxon>Gammaproteobacteria</taxon>
        <taxon>Legionellales</taxon>
        <taxon>Legionellaceae</taxon>
        <taxon>Legionella</taxon>
    </lineage>
</organism>
<evidence type="ECO:0000255" key="1">
    <source>
        <dbReference type="HAMAP-Rule" id="MF_00111"/>
    </source>
</evidence>
<accession>Q5X6Q6</accession>
<protein>
    <recommendedName>
        <fullName evidence="1">UDP-N-acetylglucosamine 1-carboxyvinyltransferase</fullName>
        <ecNumber evidence="1">2.5.1.7</ecNumber>
    </recommendedName>
    <alternativeName>
        <fullName evidence="1">Enoylpyruvate transferase</fullName>
    </alternativeName>
    <alternativeName>
        <fullName evidence="1">UDP-N-acetylglucosamine enolpyruvyl transferase</fullName>
        <shortName evidence="1">EPT</shortName>
    </alternativeName>
</protein>
<comment type="function">
    <text evidence="1">Cell wall formation. Adds enolpyruvyl to UDP-N-acetylglucosamine.</text>
</comment>
<comment type="catalytic activity">
    <reaction evidence="1">
        <text>phosphoenolpyruvate + UDP-N-acetyl-alpha-D-glucosamine = UDP-N-acetyl-3-O-(1-carboxyvinyl)-alpha-D-glucosamine + phosphate</text>
        <dbReference type="Rhea" id="RHEA:18681"/>
        <dbReference type="ChEBI" id="CHEBI:43474"/>
        <dbReference type="ChEBI" id="CHEBI:57705"/>
        <dbReference type="ChEBI" id="CHEBI:58702"/>
        <dbReference type="ChEBI" id="CHEBI:68483"/>
        <dbReference type="EC" id="2.5.1.7"/>
    </reaction>
</comment>
<comment type="pathway">
    <text evidence="1">Cell wall biogenesis; peptidoglycan biosynthesis.</text>
</comment>
<comment type="subcellular location">
    <subcellularLocation>
        <location evidence="1">Cytoplasm</location>
    </subcellularLocation>
</comment>
<comment type="similarity">
    <text evidence="1">Belongs to the EPSP synthase family. MurA subfamily.</text>
</comment>
<name>MURA_LEGPA</name>
<feature type="chain" id="PRO_0000231220" description="UDP-N-acetylglucosamine 1-carboxyvinyltransferase">
    <location>
        <begin position="1"/>
        <end position="422"/>
    </location>
</feature>
<feature type="active site" description="Proton donor" evidence="1">
    <location>
        <position position="117"/>
    </location>
</feature>
<feature type="binding site" evidence="1">
    <location>
        <begin position="22"/>
        <end position="23"/>
    </location>
    <ligand>
        <name>phosphoenolpyruvate</name>
        <dbReference type="ChEBI" id="CHEBI:58702"/>
    </ligand>
</feature>
<feature type="binding site" evidence="1">
    <location>
        <position position="93"/>
    </location>
    <ligand>
        <name>UDP-N-acetyl-alpha-D-glucosamine</name>
        <dbReference type="ChEBI" id="CHEBI:57705"/>
    </ligand>
</feature>
<feature type="binding site" evidence="1">
    <location>
        <begin position="122"/>
        <end position="126"/>
    </location>
    <ligand>
        <name>UDP-N-acetyl-alpha-D-glucosamine</name>
        <dbReference type="ChEBI" id="CHEBI:57705"/>
    </ligand>
</feature>
<feature type="binding site" evidence="1">
    <location>
        <position position="308"/>
    </location>
    <ligand>
        <name>UDP-N-acetyl-alpha-D-glucosamine</name>
        <dbReference type="ChEBI" id="CHEBI:57705"/>
    </ligand>
</feature>
<feature type="binding site" evidence="1">
    <location>
        <position position="330"/>
    </location>
    <ligand>
        <name>UDP-N-acetyl-alpha-D-glucosamine</name>
        <dbReference type="ChEBI" id="CHEBI:57705"/>
    </ligand>
</feature>
<feature type="modified residue" description="2-(S-cysteinyl)pyruvic acid O-phosphothioketal" evidence="1">
    <location>
        <position position="117"/>
    </location>
</feature>
<reference key="1">
    <citation type="journal article" date="2004" name="Nat. Genet.">
        <title>Evidence in the Legionella pneumophila genome for exploitation of host cell functions and high genome plasticity.</title>
        <authorList>
            <person name="Cazalet C."/>
            <person name="Rusniok C."/>
            <person name="Brueggemann H."/>
            <person name="Zidane N."/>
            <person name="Magnier A."/>
            <person name="Ma L."/>
            <person name="Tichit M."/>
            <person name="Jarraud S."/>
            <person name="Bouchier C."/>
            <person name="Vandenesch F."/>
            <person name="Kunst F."/>
            <person name="Etienne J."/>
            <person name="Glaser P."/>
            <person name="Buchrieser C."/>
        </authorList>
    </citation>
    <scope>NUCLEOTIDE SEQUENCE [LARGE SCALE GENOMIC DNA]</scope>
    <source>
        <strain>Paris</strain>
    </source>
</reference>
<keyword id="KW-0131">Cell cycle</keyword>
<keyword id="KW-0132">Cell division</keyword>
<keyword id="KW-0133">Cell shape</keyword>
<keyword id="KW-0961">Cell wall biogenesis/degradation</keyword>
<keyword id="KW-0963">Cytoplasm</keyword>
<keyword id="KW-0573">Peptidoglycan synthesis</keyword>
<keyword id="KW-0670">Pyruvate</keyword>
<keyword id="KW-0808">Transferase</keyword>
<sequence>MDKLLINGGKALHGEVVISGAKNAALPIMAASLLASDHVTISNVPHLKDITTMMELLGQLGAHLIVDEKMNVQVDSSQVNEFVAPYDLVKTMRASILVLGPMLARFGKADVSLPGGCAIGTRPVDLHLKALRAMGADITVKNGYINARCKKGCLQGKRLMFDTVTVTGTENVLMAAVLAEGITTIKNAAREPEVVDLANFLIQMGAKIRGAGTSTIEVEGVESLNGGTYSVMSDRIEAGTYLAAGALTRGQVTVKKVRPDTLLSQLCKFEEAGAELTIGEDWVSLNMHNKRPQAVNISTAPYPAFATDMQAQFMAMNSVAEGSSTIIETIFENRFMHVQELQRMGANIQLNGNTAIVHGVEKLTGAPVMATDLRASASLILAGLVAEGETVVERIYHVDRGYERIEEKLSLLGADIKRVSDR</sequence>
<proteinExistence type="inferred from homology"/>